<dbReference type="EMBL" id="AB022698">
    <property type="protein sequence ID" value="BAA83592.1"/>
    <property type="molecule type" value="mRNA"/>
</dbReference>
<dbReference type="CCDS" id="CCDS11420.1"/>
<dbReference type="RefSeq" id="NP_036417.1">
    <property type="nucleotide sequence ID" value="NM_012285.3"/>
</dbReference>
<dbReference type="RefSeq" id="XP_016879889.1">
    <property type="nucleotide sequence ID" value="XM_017024400.1"/>
</dbReference>
<dbReference type="SMR" id="Q9UQ05"/>
<dbReference type="BioGRID" id="116987">
    <property type="interactions" value="14"/>
</dbReference>
<dbReference type="CORUM" id="Q9UQ05"/>
<dbReference type="FunCoup" id="Q9UQ05">
    <property type="interactions" value="265"/>
</dbReference>
<dbReference type="IntAct" id="Q9UQ05">
    <property type="interactions" value="3"/>
</dbReference>
<dbReference type="STRING" id="9606.ENSP00000264661"/>
<dbReference type="ChEMBL" id="CHEMBL2362996"/>
<dbReference type="DrugBank" id="DB00228">
    <property type="generic name" value="Enflurane"/>
</dbReference>
<dbReference type="DrugBank" id="DB01110">
    <property type="generic name" value="Miconazole"/>
</dbReference>
<dbReference type="DrugBank" id="DB01069">
    <property type="generic name" value="Promethazine"/>
</dbReference>
<dbReference type="DrugCentral" id="Q9UQ05"/>
<dbReference type="GlyCosmos" id="Q9UQ05">
    <property type="glycosylation" value="3 sites, No reported glycans"/>
</dbReference>
<dbReference type="GlyGen" id="Q9UQ05">
    <property type="glycosylation" value="5 sites"/>
</dbReference>
<dbReference type="iPTMnet" id="Q9UQ05"/>
<dbReference type="PhosphoSitePlus" id="Q9UQ05"/>
<dbReference type="BioMuta" id="KCNH4"/>
<dbReference type="DMDM" id="26006815"/>
<dbReference type="jPOST" id="Q9UQ05"/>
<dbReference type="MassIVE" id="Q9UQ05"/>
<dbReference type="PaxDb" id="9606-ENSP00000264661"/>
<dbReference type="PeptideAtlas" id="Q9UQ05"/>
<dbReference type="ProteomicsDB" id="85484"/>
<dbReference type="Pumba" id="Q9UQ05"/>
<dbReference type="Antibodypedia" id="53970">
    <property type="antibodies" value="86 antibodies from 13 providers"/>
</dbReference>
<dbReference type="DNASU" id="23415"/>
<dbReference type="Ensembl" id="ENST00000264661.4">
    <property type="protein sequence ID" value="ENSP00000264661.2"/>
    <property type="gene ID" value="ENSG00000089558.9"/>
</dbReference>
<dbReference type="Ensembl" id="ENST00000607371.5">
    <property type="protein sequence ID" value="ENSP00000475564.1"/>
    <property type="gene ID" value="ENSG00000089558.9"/>
</dbReference>
<dbReference type="GeneID" id="23415"/>
<dbReference type="KEGG" id="hsa:23415"/>
<dbReference type="MANE-Select" id="ENST00000264661.4">
    <property type="protein sequence ID" value="ENSP00000264661.2"/>
    <property type="RefSeq nucleotide sequence ID" value="NM_012285.3"/>
    <property type="RefSeq protein sequence ID" value="NP_036417.1"/>
</dbReference>
<dbReference type="UCSC" id="uc002hzb.3">
    <property type="organism name" value="human"/>
</dbReference>
<dbReference type="AGR" id="HGNC:6253"/>
<dbReference type="CTD" id="23415"/>
<dbReference type="DisGeNET" id="23415"/>
<dbReference type="GeneCards" id="KCNH4"/>
<dbReference type="HGNC" id="HGNC:6253">
    <property type="gene designation" value="KCNH4"/>
</dbReference>
<dbReference type="HPA" id="ENSG00000089558">
    <property type="expression patterns" value="Tissue enriched (brain)"/>
</dbReference>
<dbReference type="MIM" id="604528">
    <property type="type" value="gene"/>
</dbReference>
<dbReference type="neXtProt" id="NX_Q9UQ05"/>
<dbReference type="OpenTargets" id="ENSG00000089558"/>
<dbReference type="PharmGKB" id="PA30039"/>
<dbReference type="VEuPathDB" id="HostDB:ENSG00000089558"/>
<dbReference type="eggNOG" id="KOG0498">
    <property type="taxonomic scope" value="Eukaryota"/>
</dbReference>
<dbReference type="GeneTree" id="ENSGT00940000156363"/>
<dbReference type="HOGENOM" id="CLU_005746_6_0_1"/>
<dbReference type="InParanoid" id="Q9UQ05"/>
<dbReference type="OMA" id="LMRHNFR"/>
<dbReference type="OrthoDB" id="432483at2759"/>
<dbReference type="PAN-GO" id="Q9UQ05">
    <property type="GO annotations" value="4 GO annotations based on evolutionary models"/>
</dbReference>
<dbReference type="PhylomeDB" id="Q9UQ05"/>
<dbReference type="TreeFam" id="TF313130"/>
<dbReference type="PathwayCommons" id="Q9UQ05"/>
<dbReference type="Reactome" id="R-HSA-1296072">
    <property type="pathway name" value="Voltage gated Potassium channels"/>
</dbReference>
<dbReference type="SignaLink" id="Q9UQ05"/>
<dbReference type="BioGRID-ORCS" id="23415">
    <property type="hits" value="19 hits in 1151 CRISPR screens"/>
</dbReference>
<dbReference type="ChiTaRS" id="KCNH4">
    <property type="organism name" value="human"/>
</dbReference>
<dbReference type="GeneWiki" id="KCNH4"/>
<dbReference type="GenomeRNAi" id="23415"/>
<dbReference type="Pharos" id="Q9UQ05">
    <property type="development level" value="Tclin"/>
</dbReference>
<dbReference type="PRO" id="PR:Q9UQ05"/>
<dbReference type="Proteomes" id="UP000005640">
    <property type="component" value="Chromosome 17"/>
</dbReference>
<dbReference type="RNAct" id="Q9UQ05">
    <property type="molecule type" value="protein"/>
</dbReference>
<dbReference type="Bgee" id="ENSG00000089558">
    <property type="expression patterns" value="Expressed in putamen and 67 other cell types or tissues"/>
</dbReference>
<dbReference type="GO" id="GO:0005886">
    <property type="term" value="C:plasma membrane"/>
    <property type="evidence" value="ECO:0000318"/>
    <property type="project" value="GO_Central"/>
</dbReference>
<dbReference type="GO" id="GO:0008076">
    <property type="term" value="C:voltage-gated potassium channel complex"/>
    <property type="evidence" value="ECO:0000304"/>
    <property type="project" value="ProtInc"/>
</dbReference>
<dbReference type="GO" id="GO:0005249">
    <property type="term" value="F:voltage-gated potassium channel activity"/>
    <property type="evidence" value="ECO:0000318"/>
    <property type="project" value="GO_Central"/>
</dbReference>
<dbReference type="GO" id="GO:0071805">
    <property type="term" value="P:potassium ion transmembrane transport"/>
    <property type="evidence" value="ECO:0000318"/>
    <property type="project" value="GO_Central"/>
</dbReference>
<dbReference type="GO" id="GO:0006813">
    <property type="term" value="P:potassium ion transport"/>
    <property type="evidence" value="ECO:0000304"/>
    <property type="project" value="ProtInc"/>
</dbReference>
<dbReference type="GO" id="GO:0042391">
    <property type="term" value="P:regulation of membrane potential"/>
    <property type="evidence" value="ECO:0000318"/>
    <property type="project" value="GO_Central"/>
</dbReference>
<dbReference type="CDD" id="cd00038">
    <property type="entry name" value="CAP_ED"/>
    <property type="match status" value="1"/>
</dbReference>
<dbReference type="CDD" id="cd00130">
    <property type="entry name" value="PAS"/>
    <property type="match status" value="1"/>
</dbReference>
<dbReference type="FunFam" id="3.30.450.20:FF:000001">
    <property type="entry name" value="Potassium voltage-gated channel subfamily H member 7"/>
    <property type="match status" value="1"/>
</dbReference>
<dbReference type="FunFam" id="1.10.1200.260:FF:000002">
    <property type="entry name" value="Potassium voltage-gated channel subfamily H member 8"/>
    <property type="match status" value="1"/>
</dbReference>
<dbReference type="FunFam" id="2.60.120.10:FF:000014">
    <property type="entry name" value="Potassium voltage-gated channel, subfamily H (Eag-related), member 4"/>
    <property type="match status" value="1"/>
</dbReference>
<dbReference type="Gene3D" id="1.10.1200.260">
    <property type="match status" value="1"/>
</dbReference>
<dbReference type="Gene3D" id="1.10.287.70">
    <property type="match status" value="1"/>
</dbReference>
<dbReference type="Gene3D" id="2.60.120.10">
    <property type="entry name" value="Jelly Rolls"/>
    <property type="match status" value="1"/>
</dbReference>
<dbReference type="Gene3D" id="3.30.450.20">
    <property type="entry name" value="PAS domain"/>
    <property type="match status" value="1"/>
</dbReference>
<dbReference type="InterPro" id="IPR000595">
    <property type="entry name" value="cNMP-bd_dom"/>
</dbReference>
<dbReference type="InterPro" id="IPR018490">
    <property type="entry name" value="cNMP-bd_dom_sf"/>
</dbReference>
<dbReference type="InterPro" id="IPR005821">
    <property type="entry name" value="Ion_trans_dom"/>
</dbReference>
<dbReference type="InterPro" id="IPR003938">
    <property type="entry name" value="K_chnl_volt-dep_EAG/ELK/ERG"/>
</dbReference>
<dbReference type="InterPro" id="IPR003950">
    <property type="entry name" value="K_chnl_volt-dep_ELK"/>
</dbReference>
<dbReference type="InterPro" id="IPR050818">
    <property type="entry name" value="KCNH_animal-type"/>
</dbReference>
<dbReference type="InterPro" id="IPR001610">
    <property type="entry name" value="PAC"/>
</dbReference>
<dbReference type="InterPro" id="IPR000014">
    <property type="entry name" value="PAS"/>
</dbReference>
<dbReference type="InterPro" id="IPR000700">
    <property type="entry name" value="PAS-assoc_C"/>
</dbReference>
<dbReference type="InterPro" id="IPR035965">
    <property type="entry name" value="PAS-like_dom_sf"/>
</dbReference>
<dbReference type="InterPro" id="IPR014710">
    <property type="entry name" value="RmlC-like_jellyroll"/>
</dbReference>
<dbReference type="NCBIfam" id="TIGR00229">
    <property type="entry name" value="sensory_box"/>
    <property type="match status" value="1"/>
</dbReference>
<dbReference type="PANTHER" id="PTHR10217:SF630">
    <property type="entry name" value="POTASSIUM VOLTAGE-GATED CHANNEL SUBFAMILY H MEMBER 4"/>
    <property type="match status" value="1"/>
</dbReference>
<dbReference type="PANTHER" id="PTHR10217">
    <property type="entry name" value="VOLTAGE AND LIGAND GATED POTASSIUM CHANNEL"/>
    <property type="match status" value="1"/>
</dbReference>
<dbReference type="Pfam" id="PF00520">
    <property type="entry name" value="Ion_trans"/>
    <property type="match status" value="1"/>
</dbReference>
<dbReference type="Pfam" id="PF13426">
    <property type="entry name" value="PAS_9"/>
    <property type="match status" value="1"/>
</dbReference>
<dbReference type="PRINTS" id="PR01463">
    <property type="entry name" value="EAGCHANLFMLY"/>
</dbReference>
<dbReference type="PRINTS" id="PR01465">
    <property type="entry name" value="ELKCHANNEL"/>
</dbReference>
<dbReference type="SMART" id="SM00100">
    <property type="entry name" value="cNMP"/>
    <property type="match status" value="1"/>
</dbReference>
<dbReference type="SMART" id="SM00086">
    <property type="entry name" value="PAC"/>
    <property type="match status" value="1"/>
</dbReference>
<dbReference type="SUPFAM" id="SSF51206">
    <property type="entry name" value="cAMP-binding domain-like"/>
    <property type="match status" value="1"/>
</dbReference>
<dbReference type="SUPFAM" id="SSF55785">
    <property type="entry name" value="PYP-like sensor domain (PAS domain)"/>
    <property type="match status" value="1"/>
</dbReference>
<dbReference type="SUPFAM" id="SSF81324">
    <property type="entry name" value="Voltage-gated potassium channels"/>
    <property type="match status" value="1"/>
</dbReference>
<dbReference type="PROSITE" id="PS50042">
    <property type="entry name" value="CNMP_BINDING_3"/>
    <property type="match status" value="1"/>
</dbReference>
<dbReference type="PROSITE" id="PS50113">
    <property type="entry name" value="PAC"/>
    <property type="match status" value="1"/>
</dbReference>
<dbReference type="PROSITE" id="PS50112">
    <property type="entry name" value="PAS"/>
    <property type="match status" value="1"/>
</dbReference>
<keyword id="KW-0325">Glycoprotein</keyword>
<keyword id="KW-0407">Ion channel</keyword>
<keyword id="KW-0406">Ion transport</keyword>
<keyword id="KW-0472">Membrane</keyword>
<keyword id="KW-0630">Potassium</keyword>
<keyword id="KW-0631">Potassium channel</keyword>
<keyword id="KW-0633">Potassium transport</keyword>
<keyword id="KW-1185">Reference proteome</keyword>
<keyword id="KW-0812">Transmembrane</keyword>
<keyword id="KW-1133">Transmembrane helix</keyword>
<keyword id="KW-0813">Transport</keyword>
<keyword id="KW-0851">Voltage-gated channel</keyword>
<sequence length="1017" mass="111693">MPVMKGLLAPQNTFLDTIATRFDGTHSNFLLANAQGTRGFPIVYCSDGFCELTGYGRTEVMQKTCSCRFLYGPETSEPALQRLHKALEGHQEHRAEICFYRKDGSAFWCLLDMMPIKNEMGEVVLFLFSFKDITQSGSPGLGPQGGRGDSNHENSLGRRGATWKFRSARRRSRTVLHRLTGHFGRRGQGGMKANNNVFEPKPSVPEYKVASVGGSRCLLLHYSVSKAIWDGLILLATFYVAVTVPYNVCFSGDDDTPITSRHTLVSDIAVEMLFILDIILNFRTTYVSQSGQVISAPRSIGLHYLATWFFIDLIAALPFDLLYIFNITVTSLVHLLKTVRLLRLLRLLQKLERYSQCSAVVLTLLMSVFALLAHWMACIWYVIGRREMEANDPLLWDIGWLHELGKRLEVPYVNGSVGGPSRRSAYIAALYFTLSSLTSVGFGNVCANTDAEKIFSICTMLIGALMHAVVFGNVTAIIQRMYSRRSLYHSRMKDLKDFIRVHRLPRPLKQRMLEYFQTTWAVNSGIDANELLRDFPDELRADIAMHLNREILQLPLFGAASRGCLRALSLHIKTSFCAPGEYLLRRGDALQAHYYVCSGSLEVLRDNMVLAILGKGDLIGADIPEPGQEPGLGADPNFVLKTSADVKALTYCGLQQLSSRGLAEVLRLYPEYGAAFRAGLPRDLTFNLRQGSDTSGLSRFSRSPRLSQPRSESLGSSSDKTLPSITEAESGAEPGGGPRPRRPLLLPNLSPARPRGSLVSLLGEELPPFSALVSSPSLSPSLSPALAGQGHSASPHGPPRCSAAWKPPQLLIPPLGTFGPPDLSPRIVDGIEDSGSTAEAPSFRFSRRPELPRPRSQAPPTGTRPSPELASEAEEVKEKVCRLNQEISRLNQEVSQLSRELRHIMGLLQARLGPPGHPAGSAWTPDPPCPQLRPPCLSPCASRPPPSLQDTTLAEVHCPASVGTMETGTALLDLRPSILPPYPSEPDPLGPSPVPEASPPTPSLLRHSFQSRSDTFH</sequence>
<comment type="function">
    <text evidence="2 8">Pore-forming (alpha) subunit of a voltage-gated delayed rectifier (PubMed:10455180). Activates at more negative voltages, exhibits fast prepulse-independent activation kinetics and deactivates much more slowly, but shows no inactivation (By similarity).</text>
</comment>
<comment type="catalytic activity">
    <reaction evidence="8">
        <text>K(+)(in) = K(+)(out)</text>
        <dbReference type="Rhea" id="RHEA:29463"/>
        <dbReference type="ChEBI" id="CHEBI:29103"/>
    </reaction>
</comment>
<comment type="subunit">
    <text evidence="11">The potassium channel is probably composed of a homo- or heterotetrameric complex of pore-forming alpha subunits that can associate with modulating beta subunits.</text>
</comment>
<comment type="subcellular location">
    <subcellularLocation>
        <location evidence="3">Membrane</location>
        <topology evidence="3">Multi-pass membrane protein</topology>
    </subcellularLocation>
</comment>
<comment type="tissue specificity">
    <text evidence="8">Detected only in brain, in particular in the telencephalon (PubMed:10455180). Detected in putamen and caudate nucleus, and at lower levels in cerebral cortex, occipital and hippocampus (PubMed:10455180).</text>
</comment>
<comment type="similarity">
    <text evidence="11">Belongs to the potassium channel family. H (Eag) (TC 1.A.1.20) subfamily. Kv12.3/KCNH4 sub-subfamily.</text>
</comment>
<gene>
    <name evidence="12" type="primary">KCNH4</name>
</gene>
<proteinExistence type="evidence at transcript level"/>
<feature type="chain" id="PRO_0000054008" description="Voltage-gated delayed rectifier potassium channel KCNH4">
    <location>
        <begin position="1"/>
        <end position="1017"/>
    </location>
</feature>
<feature type="topological domain" description="Cytoplasmic" evidence="3">
    <location>
        <begin position="1"/>
        <end position="228"/>
    </location>
</feature>
<feature type="transmembrane region" description="Helical; Name=Segment S1" evidence="3">
    <location>
        <begin position="229"/>
        <end position="249"/>
    </location>
</feature>
<feature type="topological domain" description="Extracellular" evidence="3">
    <location>
        <begin position="250"/>
        <end position="259"/>
    </location>
</feature>
<feature type="transmembrane region" description="Helical; Name=Segment S2" evidence="3">
    <location>
        <begin position="260"/>
        <end position="280"/>
    </location>
</feature>
<feature type="topological domain" description="Cytoplasmic" evidence="3">
    <location>
        <begin position="281"/>
        <end position="302"/>
    </location>
</feature>
<feature type="transmembrane region" description="Helical; Name=Segment S3" evidence="3">
    <location>
        <begin position="303"/>
        <end position="323"/>
    </location>
</feature>
<feature type="topological domain" description="Extracellular" evidence="3">
    <location>
        <begin position="324"/>
        <end position="332"/>
    </location>
</feature>
<feature type="transmembrane region" description="Helical; Voltage-sensor; Name=Segment S4" evidence="3">
    <location>
        <begin position="333"/>
        <end position="353"/>
    </location>
</feature>
<feature type="topological domain" description="Cytoplasmic" evidence="3">
    <location>
        <begin position="354"/>
        <end position="361"/>
    </location>
</feature>
<feature type="transmembrane region" description="Helical; Name=Segment S5" evidence="3">
    <location>
        <begin position="362"/>
        <end position="382"/>
    </location>
</feature>
<feature type="topological domain" description="Extracellular" evidence="3">
    <location>
        <begin position="383"/>
        <end position="427"/>
    </location>
</feature>
<feature type="intramembrane region" description="Pore-forming; Name=Segment H5" evidence="3">
    <location>
        <begin position="428"/>
        <end position="448"/>
    </location>
</feature>
<feature type="topological domain" description="Extracellular" evidence="3">
    <location>
        <begin position="449"/>
        <end position="482"/>
    </location>
</feature>
<feature type="transmembrane region" description="Helical; Name=Segment S6" evidence="3">
    <location>
        <begin position="483"/>
        <end position="503"/>
    </location>
</feature>
<feature type="topological domain" description="Cytoplasmic" evidence="3">
    <location>
        <begin position="504"/>
        <end position="1017"/>
    </location>
</feature>
<feature type="domain" description="PAS" evidence="5">
    <location>
        <begin position="14"/>
        <end position="90"/>
    </location>
</feature>
<feature type="domain" description="PAC" evidence="6">
    <location>
        <begin position="93"/>
        <end position="145"/>
    </location>
</feature>
<feature type="region of interest" description="Disordered" evidence="7">
    <location>
        <begin position="138"/>
        <end position="157"/>
    </location>
</feature>
<feature type="region of interest" description="cNMP-binding domain" evidence="4">
    <location>
        <begin position="556"/>
        <end position="620"/>
    </location>
</feature>
<feature type="region of interest" description="Disordered" evidence="7">
    <location>
        <begin position="691"/>
        <end position="749"/>
    </location>
</feature>
<feature type="region of interest" description="Disordered" evidence="7">
    <location>
        <begin position="772"/>
        <end position="803"/>
    </location>
</feature>
<feature type="region of interest" description="Disordered" evidence="7">
    <location>
        <begin position="821"/>
        <end position="875"/>
    </location>
</feature>
<feature type="region of interest" description="Disordered" evidence="7">
    <location>
        <begin position="971"/>
        <end position="1017"/>
    </location>
</feature>
<feature type="short sequence motif" description="Selectivity filter" evidence="1">
    <location>
        <begin position="439"/>
        <end position="444"/>
    </location>
</feature>
<feature type="compositionally biased region" description="Gly residues" evidence="7">
    <location>
        <begin position="139"/>
        <end position="148"/>
    </location>
</feature>
<feature type="compositionally biased region" description="Polar residues" evidence="7">
    <location>
        <begin position="691"/>
        <end position="724"/>
    </location>
</feature>
<feature type="compositionally biased region" description="Low complexity" evidence="7">
    <location>
        <begin position="772"/>
        <end position="787"/>
    </location>
</feature>
<feature type="compositionally biased region" description="Pro residues" evidence="7">
    <location>
        <begin position="978"/>
        <end position="1002"/>
    </location>
</feature>
<feature type="compositionally biased region" description="Polar residues" evidence="7">
    <location>
        <begin position="1008"/>
        <end position="1017"/>
    </location>
</feature>
<feature type="glycosylation site" description="N-linked (GlcNAc...) asparagine" evidence="3">
    <location>
        <position position="326"/>
    </location>
</feature>
<feature type="glycosylation site" description="N-linked (GlcNAc...) asparagine" evidence="3">
    <location>
        <position position="414"/>
    </location>
</feature>
<feature type="glycosylation site" description="N-linked (GlcNAc...) asparagine" evidence="3">
    <location>
        <position position="473"/>
    </location>
</feature>
<feature type="sequence variant" id="VAR_035771" description="In a colorectal cancer sample; somatic mutation." evidence="9">
    <original>G</original>
    <variation>R</variation>
    <location>
        <position position="797"/>
    </location>
</feature>
<evidence type="ECO:0000250" key="1"/>
<evidence type="ECO:0000250" key="2">
    <source>
        <dbReference type="UniProtKB" id="Q9R1T9"/>
    </source>
</evidence>
<evidence type="ECO:0000255" key="3"/>
<evidence type="ECO:0000255" key="4">
    <source>
        <dbReference type="PROSITE-ProRule" id="PRU00060"/>
    </source>
</evidence>
<evidence type="ECO:0000255" key="5">
    <source>
        <dbReference type="PROSITE-ProRule" id="PRU00140"/>
    </source>
</evidence>
<evidence type="ECO:0000255" key="6">
    <source>
        <dbReference type="PROSITE-ProRule" id="PRU00141"/>
    </source>
</evidence>
<evidence type="ECO:0000256" key="7">
    <source>
        <dbReference type="SAM" id="MobiDB-lite"/>
    </source>
</evidence>
<evidence type="ECO:0000269" key="8">
    <source>
    </source>
</evidence>
<evidence type="ECO:0000269" key="9">
    <source>
    </source>
</evidence>
<evidence type="ECO:0000303" key="10">
    <source>
    </source>
</evidence>
<evidence type="ECO:0000305" key="11"/>
<evidence type="ECO:0000312" key="12">
    <source>
        <dbReference type="HGNC" id="HGNC:6253"/>
    </source>
</evidence>
<organism>
    <name type="scientific">Homo sapiens</name>
    <name type="common">Human</name>
    <dbReference type="NCBI Taxonomy" id="9606"/>
    <lineage>
        <taxon>Eukaryota</taxon>
        <taxon>Metazoa</taxon>
        <taxon>Chordata</taxon>
        <taxon>Craniata</taxon>
        <taxon>Vertebrata</taxon>
        <taxon>Euteleostomi</taxon>
        <taxon>Mammalia</taxon>
        <taxon>Eutheria</taxon>
        <taxon>Euarchontoglires</taxon>
        <taxon>Primates</taxon>
        <taxon>Haplorrhini</taxon>
        <taxon>Catarrhini</taxon>
        <taxon>Hominidae</taxon>
        <taxon>Homo</taxon>
    </lineage>
</organism>
<reference key="1">
    <citation type="journal article" date="1999" name="J. Biol. Chem.">
        <title>New ether-a-go-go K+ channel family members localized in human telencephalon.</title>
        <authorList>
            <person name="Miyake A."/>
            <person name="Mochizuki S."/>
            <person name="Yokoi H."/>
            <person name="Kohda M."/>
            <person name="Furuichi K."/>
        </authorList>
    </citation>
    <scope>NUCLEOTIDE SEQUENCE [MRNA]</scope>
    <scope>FUNCTION</scope>
    <scope>TRANSPORTER ACTIVITY</scope>
    <scope>TISSUE SPECIFICITY</scope>
    <source>
        <tissue>Brain</tissue>
    </source>
</reference>
<reference key="2">
    <citation type="journal article" date="2006" name="Science">
        <title>The consensus coding sequences of human breast and colorectal cancers.</title>
        <authorList>
            <person name="Sjoeblom T."/>
            <person name="Jones S."/>
            <person name="Wood L.D."/>
            <person name="Parsons D.W."/>
            <person name="Lin J."/>
            <person name="Barber T.D."/>
            <person name="Mandelker D."/>
            <person name="Leary R.J."/>
            <person name="Ptak J."/>
            <person name="Silliman N."/>
            <person name="Szabo S."/>
            <person name="Buckhaults P."/>
            <person name="Farrell C."/>
            <person name="Meeh P."/>
            <person name="Markowitz S.D."/>
            <person name="Willis J."/>
            <person name="Dawson D."/>
            <person name="Willson J.K.V."/>
            <person name="Gazdar A.F."/>
            <person name="Hartigan J."/>
            <person name="Wu L."/>
            <person name="Liu C."/>
            <person name="Parmigiani G."/>
            <person name="Park B.H."/>
            <person name="Bachman K.E."/>
            <person name="Papadopoulos N."/>
            <person name="Vogelstein B."/>
            <person name="Kinzler K.W."/>
            <person name="Velculescu V.E."/>
        </authorList>
    </citation>
    <scope>VARIANT [LARGE SCALE ANALYSIS] ARG-797</scope>
</reference>
<protein>
    <recommendedName>
        <fullName evidence="11">Voltage-gated delayed rectifier potassium channel KCNH4</fullName>
    </recommendedName>
    <alternativeName>
        <fullName>Brain-specific eag-like channel 2</fullName>
        <shortName evidence="10">BEC2</shortName>
    </alternativeName>
    <alternativeName>
        <fullName>Ether-a-go-go-like potassium channel 1</fullName>
        <shortName>ELK channel 1</shortName>
        <shortName>ELK1</shortName>
    </alternativeName>
    <alternativeName>
        <fullName>Potassium voltage-gated channel subfamily H member 4</fullName>
    </alternativeName>
    <alternativeName>
        <fullName>Voltage-gated potassium channel subunit Kv12.3</fullName>
    </alternativeName>
</protein>
<name>KCNH4_HUMAN</name>
<accession>Q9UQ05</accession>